<organism>
    <name type="scientific">Vesicomyosocius okutanii subsp. Calyptogena okutanii (strain HA)</name>
    <dbReference type="NCBI Taxonomy" id="412965"/>
    <lineage>
        <taxon>Bacteria</taxon>
        <taxon>Pseudomonadati</taxon>
        <taxon>Pseudomonadota</taxon>
        <taxon>Gammaproteobacteria</taxon>
        <taxon>Candidatus Pseudothioglobaceae</taxon>
        <taxon>Candidatus Vesicomyosocius</taxon>
    </lineage>
</organism>
<reference key="1">
    <citation type="journal article" date="2007" name="Curr. Biol.">
        <title>Reduced genome of the thioautotrophic intracellular symbiont in a deep-sea clam, Calyptogena okutanii.</title>
        <authorList>
            <person name="Kuwahara H."/>
            <person name="Yoshida T."/>
            <person name="Takaki Y."/>
            <person name="Shimamura S."/>
            <person name="Nishi S."/>
            <person name="Harada M."/>
            <person name="Matsuyama K."/>
            <person name="Takishita K."/>
            <person name="Kawato M."/>
            <person name="Uematsu K."/>
            <person name="Fujiwara Y."/>
            <person name="Sato T."/>
            <person name="Kato C."/>
            <person name="Kitagawa M."/>
            <person name="Kato I."/>
            <person name="Maruyama T."/>
        </authorList>
    </citation>
    <scope>NUCLEOTIDE SEQUENCE [LARGE SCALE GENOMIC DNA]</scope>
    <source>
        <strain>HA</strain>
    </source>
</reference>
<accession>A5CWJ4</accession>
<protein>
    <recommendedName>
        <fullName evidence="1">Elongation factor 4</fullName>
        <shortName evidence="1">EF-4</shortName>
        <ecNumber evidence="1">3.6.5.n1</ecNumber>
    </recommendedName>
    <alternativeName>
        <fullName evidence="1">Ribosomal back-translocase LepA</fullName>
    </alternativeName>
</protein>
<keyword id="KW-0997">Cell inner membrane</keyword>
<keyword id="KW-1003">Cell membrane</keyword>
<keyword id="KW-0342">GTP-binding</keyword>
<keyword id="KW-0378">Hydrolase</keyword>
<keyword id="KW-0472">Membrane</keyword>
<keyword id="KW-0547">Nucleotide-binding</keyword>
<keyword id="KW-0648">Protein biosynthesis</keyword>
<keyword id="KW-1185">Reference proteome</keyword>
<feature type="chain" id="PRO_1000092460" description="Elongation factor 4">
    <location>
        <begin position="1"/>
        <end position="595"/>
    </location>
</feature>
<feature type="domain" description="tr-type G">
    <location>
        <begin position="2"/>
        <end position="184"/>
    </location>
</feature>
<feature type="binding site" evidence="1">
    <location>
        <begin position="14"/>
        <end position="19"/>
    </location>
    <ligand>
        <name>GTP</name>
        <dbReference type="ChEBI" id="CHEBI:37565"/>
    </ligand>
</feature>
<feature type="binding site" evidence="1">
    <location>
        <begin position="131"/>
        <end position="134"/>
    </location>
    <ligand>
        <name>GTP</name>
        <dbReference type="ChEBI" id="CHEBI:37565"/>
    </ligand>
</feature>
<comment type="function">
    <text evidence="1">Required for accurate and efficient protein synthesis under certain stress conditions. May act as a fidelity factor of the translation reaction, by catalyzing a one-codon backward translocation of tRNAs on improperly translocated ribosomes. Back-translocation proceeds from a post-translocation (POST) complex to a pre-translocation (PRE) complex, thus giving elongation factor G a second chance to translocate the tRNAs correctly. Binds to ribosomes in a GTP-dependent manner.</text>
</comment>
<comment type="catalytic activity">
    <reaction evidence="1">
        <text>GTP + H2O = GDP + phosphate + H(+)</text>
        <dbReference type="Rhea" id="RHEA:19669"/>
        <dbReference type="ChEBI" id="CHEBI:15377"/>
        <dbReference type="ChEBI" id="CHEBI:15378"/>
        <dbReference type="ChEBI" id="CHEBI:37565"/>
        <dbReference type="ChEBI" id="CHEBI:43474"/>
        <dbReference type="ChEBI" id="CHEBI:58189"/>
        <dbReference type="EC" id="3.6.5.n1"/>
    </reaction>
</comment>
<comment type="subcellular location">
    <subcellularLocation>
        <location evidence="1">Cell inner membrane</location>
        <topology evidence="1">Peripheral membrane protein</topology>
        <orientation evidence="1">Cytoplasmic side</orientation>
    </subcellularLocation>
</comment>
<comment type="similarity">
    <text evidence="1">Belongs to the TRAFAC class translation factor GTPase superfamily. Classic translation factor GTPase family. LepA subfamily.</text>
</comment>
<gene>
    <name evidence="1" type="primary">lepA</name>
    <name type="ordered locus">COSY_0559</name>
</gene>
<sequence>MKNIRNFSIIAHIDHGKSTIADCFIQFCGGLSDREMSSQVLDSMDIEKERGITIKSQSVTLDYHAKNGETYQLNFIDTPGHVDFSYEVSRSLSACEGALLIVDASQGVEAQTVANCYTALEQGLQVVSVLNKIDLPAADPERVMDEIEDVIGVEAHDVVHASAKLGIGIEDILEQIVERIPTPKGNINAPIKALIIDSWFDSYLGVVSLIRMIDGEIKIKTKIKIFSNGGEYIVDEVGIFTPKRKRIDSLKAGEVGFLIANIKNIDGAPVGDTITSAENPASESLEGFRPVQPCVFAGIFPISGKDYEKFRDALAKLRLNDAALQYEPENSDVLGFGFRIGFLGLLHMEIVQERLEREYDLDLIITAPTVIYEILDTKGIIHRVDSLSKMPTNQSISKFREPIITAKILVISKYVGAVMNLCIEKRGIQKNIIYMSRQVSLIYELPLNEVVLDFFDRLKSVSRGFASMDYHFERYQESDLICLDVMINQEPVDALALIMHRDDSVRKGNELVEKMKELIPRQMFDVTIQACIGSKIISRSNVKALRKNVTAKCYGGDVSRKKKLLDKQNKGKKRMRSVGRVDIPKEVFLAILHIN</sequence>
<proteinExistence type="inferred from homology"/>
<evidence type="ECO:0000255" key="1">
    <source>
        <dbReference type="HAMAP-Rule" id="MF_00071"/>
    </source>
</evidence>
<dbReference type="EC" id="3.6.5.n1" evidence="1"/>
<dbReference type="EMBL" id="AP009247">
    <property type="protein sequence ID" value="BAF61676.1"/>
    <property type="molecule type" value="Genomic_DNA"/>
</dbReference>
<dbReference type="RefSeq" id="WP_011929946.1">
    <property type="nucleotide sequence ID" value="NC_009465.1"/>
</dbReference>
<dbReference type="SMR" id="A5CWJ4"/>
<dbReference type="STRING" id="412965.COSY_0559"/>
<dbReference type="KEGG" id="vok:COSY_0559"/>
<dbReference type="eggNOG" id="COG0481">
    <property type="taxonomic scope" value="Bacteria"/>
</dbReference>
<dbReference type="HOGENOM" id="CLU_009995_3_3_6"/>
<dbReference type="OrthoDB" id="9804431at2"/>
<dbReference type="Proteomes" id="UP000000247">
    <property type="component" value="Chromosome"/>
</dbReference>
<dbReference type="GO" id="GO:0005886">
    <property type="term" value="C:plasma membrane"/>
    <property type="evidence" value="ECO:0007669"/>
    <property type="project" value="UniProtKB-SubCell"/>
</dbReference>
<dbReference type="GO" id="GO:0005525">
    <property type="term" value="F:GTP binding"/>
    <property type="evidence" value="ECO:0007669"/>
    <property type="project" value="UniProtKB-UniRule"/>
</dbReference>
<dbReference type="GO" id="GO:0003924">
    <property type="term" value="F:GTPase activity"/>
    <property type="evidence" value="ECO:0007669"/>
    <property type="project" value="UniProtKB-UniRule"/>
</dbReference>
<dbReference type="GO" id="GO:0097216">
    <property type="term" value="F:guanosine tetraphosphate binding"/>
    <property type="evidence" value="ECO:0007669"/>
    <property type="project" value="UniProtKB-ARBA"/>
</dbReference>
<dbReference type="GO" id="GO:0043022">
    <property type="term" value="F:ribosome binding"/>
    <property type="evidence" value="ECO:0007669"/>
    <property type="project" value="UniProtKB-UniRule"/>
</dbReference>
<dbReference type="GO" id="GO:0003746">
    <property type="term" value="F:translation elongation factor activity"/>
    <property type="evidence" value="ECO:0007669"/>
    <property type="project" value="UniProtKB-UniRule"/>
</dbReference>
<dbReference type="GO" id="GO:0045727">
    <property type="term" value="P:positive regulation of translation"/>
    <property type="evidence" value="ECO:0007669"/>
    <property type="project" value="UniProtKB-UniRule"/>
</dbReference>
<dbReference type="CDD" id="cd03699">
    <property type="entry name" value="EF4_II"/>
    <property type="match status" value="1"/>
</dbReference>
<dbReference type="CDD" id="cd16260">
    <property type="entry name" value="EF4_III"/>
    <property type="match status" value="1"/>
</dbReference>
<dbReference type="CDD" id="cd01890">
    <property type="entry name" value="LepA"/>
    <property type="match status" value="1"/>
</dbReference>
<dbReference type="CDD" id="cd03709">
    <property type="entry name" value="lepA_C"/>
    <property type="match status" value="1"/>
</dbReference>
<dbReference type="FunFam" id="3.40.50.300:FF:000078">
    <property type="entry name" value="Elongation factor 4"/>
    <property type="match status" value="1"/>
</dbReference>
<dbReference type="FunFam" id="2.40.30.10:FF:000015">
    <property type="entry name" value="Translation factor GUF1, mitochondrial"/>
    <property type="match status" value="1"/>
</dbReference>
<dbReference type="FunFam" id="3.30.70.2570:FF:000001">
    <property type="entry name" value="Translation factor GUF1, mitochondrial"/>
    <property type="match status" value="1"/>
</dbReference>
<dbReference type="FunFam" id="3.30.70.870:FF:000004">
    <property type="entry name" value="Translation factor GUF1, mitochondrial"/>
    <property type="match status" value="1"/>
</dbReference>
<dbReference type="Gene3D" id="3.30.70.240">
    <property type="match status" value="1"/>
</dbReference>
<dbReference type="Gene3D" id="3.30.70.2570">
    <property type="entry name" value="Elongation factor 4, C-terminal domain"/>
    <property type="match status" value="1"/>
</dbReference>
<dbReference type="Gene3D" id="3.30.70.870">
    <property type="entry name" value="Elongation Factor G (Translational Gtpase), domain 3"/>
    <property type="match status" value="1"/>
</dbReference>
<dbReference type="Gene3D" id="3.40.50.300">
    <property type="entry name" value="P-loop containing nucleotide triphosphate hydrolases"/>
    <property type="match status" value="1"/>
</dbReference>
<dbReference type="Gene3D" id="2.40.30.10">
    <property type="entry name" value="Translation factors"/>
    <property type="match status" value="1"/>
</dbReference>
<dbReference type="HAMAP" id="MF_00071">
    <property type="entry name" value="LepA"/>
    <property type="match status" value="1"/>
</dbReference>
<dbReference type="InterPro" id="IPR006297">
    <property type="entry name" value="EF-4"/>
</dbReference>
<dbReference type="InterPro" id="IPR035647">
    <property type="entry name" value="EFG_III/V"/>
</dbReference>
<dbReference type="InterPro" id="IPR000640">
    <property type="entry name" value="EFG_V-like"/>
</dbReference>
<dbReference type="InterPro" id="IPR031157">
    <property type="entry name" value="G_TR_CS"/>
</dbReference>
<dbReference type="InterPro" id="IPR038363">
    <property type="entry name" value="LepA_C_sf"/>
</dbReference>
<dbReference type="InterPro" id="IPR013842">
    <property type="entry name" value="LepA_CTD"/>
</dbReference>
<dbReference type="InterPro" id="IPR035654">
    <property type="entry name" value="LepA_IV"/>
</dbReference>
<dbReference type="InterPro" id="IPR027417">
    <property type="entry name" value="P-loop_NTPase"/>
</dbReference>
<dbReference type="InterPro" id="IPR005225">
    <property type="entry name" value="Small_GTP-bd"/>
</dbReference>
<dbReference type="InterPro" id="IPR000795">
    <property type="entry name" value="T_Tr_GTP-bd_dom"/>
</dbReference>
<dbReference type="NCBIfam" id="TIGR01393">
    <property type="entry name" value="lepA"/>
    <property type="match status" value="1"/>
</dbReference>
<dbReference type="NCBIfam" id="TIGR00231">
    <property type="entry name" value="small_GTP"/>
    <property type="match status" value="1"/>
</dbReference>
<dbReference type="PANTHER" id="PTHR43512:SF4">
    <property type="entry name" value="TRANSLATION FACTOR GUF1 HOMOLOG, CHLOROPLASTIC"/>
    <property type="match status" value="1"/>
</dbReference>
<dbReference type="PANTHER" id="PTHR43512">
    <property type="entry name" value="TRANSLATION FACTOR GUF1-RELATED"/>
    <property type="match status" value="1"/>
</dbReference>
<dbReference type="Pfam" id="PF00679">
    <property type="entry name" value="EFG_C"/>
    <property type="match status" value="1"/>
</dbReference>
<dbReference type="Pfam" id="PF00009">
    <property type="entry name" value="GTP_EFTU"/>
    <property type="match status" value="1"/>
</dbReference>
<dbReference type="Pfam" id="PF06421">
    <property type="entry name" value="LepA_C"/>
    <property type="match status" value="1"/>
</dbReference>
<dbReference type="PRINTS" id="PR00315">
    <property type="entry name" value="ELONGATNFCT"/>
</dbReference>
<dbReference type="SUPFAM" id="SSF54980">
    <property type="entry name" value="EF-G C-terminal domain-like"/>
    <property type="match status" value="2"/>
</dbReference>
<dbReference type="SUPFAM" id="SSF52540">
    <property type="entry name" value="P-loop containing nucleoside triphosphate hydrolases"/>
    <property type="match status" value="1"/>
</dbReference>
<dbReference type="PROSITE" id="PS00301">
    <property type="entry name" value="G_TR_1"/>
    <property type="match status" value="1"/>
</dbReference>
<dbReference type="PROSITE" id="PS51722">
    <property type="entry name" value="G_TR_2"/>
    <property type="match status" value="1"/>
</dbReference>
<name>LEPA_VESOH</name>